<evidence type="ECO:0000255" key="1">
    <source>
        <dbReference type="HAMAP-Rule" id="MF_00006"/>
    </source>
</evidence>
<gene>
    <name evidence="1" type="primary">argH</name>
    <name type="ordered locus">ABBFA_003274</name>
</gene>
<feature type="chain" id="PRO_1000116296" description="Argininosuccinate lyase">
    <location>
        <begin position="1"/>
        <end position="477"/>
    </location>
</feature>
<organism>
    <name type="scientific">Acinetobacter baumannii (strain AB307-0294)</name>
    <dbReference type="NCBI Taxonomy" id="557600"/>
    <lineage>
        <taxon>Bacteria</taxon>
        <taxon>Pseudomonadati</taxon>
        <taxon>Pseudomonadota</taxon>
        <taxon>Gammaproteobacteria</taxon>
        <taxon>Moraxellales</taxon>
        <taxon>Moraxellaceae</taxon>
        <taxon>Acinetobacter</taxon>
        <taxon>Acinetobacter calcoaceticus/baumannii complex</taxon>
    </lineage>
</organism>
<accession>B7H1L9</accession>
<comment type="catalytic activity">
    <reaction evidence="1">
        <text>2-(N(omega)-L-arginino)succinate = fumarate + L-arginine</text>
        <dbReference type="Rhea" id="RHEA:24020"/>
        <dbReference type="ChEBI" id="CHEBI:29806"/>
        <dbReference type="ChEBI" id="CHEBI:32682"/>
        <dbReference type="ChEBI" id="CHEBI:57472"/>
        <dbReference type="EC" id="4.3.2.1"/>
    </reaction>
</comment>
<comment type="pathway">
    <text evidence="1">Amino-acid biosynthesis; L-arginine biosynthesis; L-arginine from L-ornithine and carbamoyl phosphate: step 3/3.</text>
</comment>
<comment type="subcellular location">
    <subcellularLocation>
        <location evidence="1">Cytoplasm</location>
    </subcellularLocation>
</comment>
<comment type="similarity">
    <text evidence="1">Belongs to the lyase 1 family. Argininosuccinate lyase subfamily.</text>
</comment>
<protein>
    <recommendedName>
        <fullName evidence="1">Argininosuccinate lyase</fullName>
        <shortName evidence="1">ASAL</shortName>
        <ecNumber evidence="1">4.3.2.1</ecNumber>
    </recommendedName>
    <alternativeName>
        <fullName evidence="1">Arginosuccinase</fullName>
    </alternativeName>
</protein>
<sequence length="477" mass="52721">MTTSSNPPNSAAPNQTSGMWGGRFSEATDAFVAEFTASVQFDQRFYKQDIAGSIAHATMLAKVGVLTEAERDDIIEGLSTIRAEIEAGTFEWRIDLEDVHMNIESRLTQRIGITGKKLHTGRSRNDQVATDIRLYLRDEIDDILGLLERLQKGLLGLAAKNVNTIMPGFTHLQTAQPVTFGHHLLAWFEMLVRDTERLQDCRKRVNRMPLGSAALAGTTYPIDRAYTAELLGFEAVSENSLDAVSDRDFAIEFNAAASLIMMHLSRMSEELILWTSAQFKFVNIPDRFCTGSSIMPQKKNPDVPELIRGKSGRVFGDLVSLLTLMKGQPLAYNKDNQEDKEPLFDAIDTVRGSLMAFADMIPALVPNVEIMREAALRGFSTATDLADYLVKKGVAFRDAHEIVGKAVALGVAEEKDLSELTLEQLQQFSDLITADVFDKALTLEASVNARDHIGGTSPKQVEAAIARAHKRLEQLYA</sequence>
<proteinExistence type="inferred from homology"/>
<dbReference type="EC" id="4.3.2.1" evidence="1"/>
<dbReference type="EMBL" id="CP001172">
    <property type="protein sequence ID" value="ACJ58868.1"/>
    <property type="molecule type" value="Genomic_DNA"/>
</dbReference>
<dbReference type="RefSeq" id="WP_000213742.1">
    <property type="nucleotide sequence ID" value="NZ_CP001172.1"/>
</dbReference>
<dbReference type="SMR" id="B7H1L9"/>
<dbReference type="HOGENOM" id="CLU_027272_2_3_6"/>
<dbReference type="UniPathway" id="UPA00068">
    <property type="reaction ID" value="UER00114"/>
</dbReference>
<dbReference type="Proteomes" id="UP000006924">
    <property type="component" value="Chromosome"/>
</dbReference>
<dbReference type="GO" id="GO:0005829">
    <property type="term" value="C:cytosol"/>
    <property type="evidence" value="ECO:0007669"/>
    <property type="project" value="TreeGrafter"/>
</dbReference>
<dbReference type="GO" id="GO:0004056">
    <property type="term" value="F:argininosuccinate lyase activity"/>
    <property type="evidence" value="ECO:0007669"/>
    <property type="project" value="UniProtKB-UniRule"/>
</dbReference>
<dbReference type="GO" id="GO:0042450">
    <property type="term" value="P:arginine biosynthetic process via ornithine"/>
    <property type="evidence" value="ECO:0007669"/>
    <property type="project" value="InterPro"/>
</dbReference>
<dbReference type="GO" id="GO:0006526">
    <property type="term" value="P:L-arginine biosynthetic process"/>
    <property type="evidence" value="ECO:0007669"/>
    <property type="project" value="UniProtKB-UniRule"/>
</dbReference>
<dbReference type="CDD" id="cd01359">
    <property type="entry name" value="Argininosuccinate_lyase"/>
    <property type="match status" value="1"/>
</dbReference>
<dbReference type="FunFam" id="1.10.275.10:FF:000002">
    <property type="entry name" value="Argininosuccinate lyase"/>
    <property type="match status" value="1"/>
</dbReference>
<dbReference type="FunFam" id="1.10.40.30:FF:000001">
    <property type="entry name" value="Argininosuccinate lyase"/>
    <property type="match status" value="1"/>
</dbReference>
<dbReference type="FunFam" id="1.20.200.10:FF:000015">
    <property type="entry name" value="argininosuccinate lyase isoform X2"/>
    <property type="match status" value="1"/>
</dbReference>
<dbReference type="Gene3D" id="1.10.40.30">
    <property type="entry name" value="Fumarase/aspartase (C-terminal domain)"/>
    <property type="match status" value="1"/>
</dbReference>
<dbReference type="Gene3D" id="1.20.200.10">
    <property type="entry name" value="Fumarase/aspartase (Central domain)"/>
    <property type="match status" value="1"/>
</dbReference>
<dbReference type="Gene3D" id="1.10.275.10">
    <property type="entry name" value="Fumarase/aspartase (N-terminal domain)"/>
    <property type="match status" value="1"/>
</dbReference>
<dbReference type="HAMAP" id="MF_00006">
    <property type="entry name" value="Arg_succ_lyase"/>
    <property type="match status" value="1"/>
</dbReference>
<dbReference type="InterPro" id="IPR029419">
    <property type="entry name" value="Arg_succ_lyase_C"/>
</dbReference>
<dbReference type="InterPro" id="IPR009049">
    <property type="entry name" value="Argininosuccinate_lyase"/>
</dbReference>
<dbReference type="InterPro" id="IPR024083">
    <property type="entry name" value="Fumarase/histidase_N"/>
</dbReference>
<dbReference type="InterPro" id="IPR020557">
    <property type="entry name" value="Fumarate_lyase_CS"/>
</dbReference>
<dbReference type="InterPro" id="IPR000362">
    <property type="entry name" value="Fumarate_lyase_fam"/>
</dbReference>
<dbReference type="InterPro" id="IPR022761">
    <property type="entry name" value="Fumarate_lyase_N"/>
</dbReference>
<dbReference type="InterPro" id="IPR008948">
    <property type="entry name" value="L-Aspartase-like"/>
</dbReference>
<dbReference type="NCBIfam" id="TIGR00838">
    <property type="entry name" value="argH"/>
    <property type="match status" value="1"/>
</dbReference>
<dbReference type="PANTHER" id="PTHR43814">
    <property type="entry name" value="ARGININOSUCCINATE LYASE"/>
    <property type="match status" value="1"/>
</dbReference>
<dbReference type="PANTHER" id="PTHR43814:SF1">
    <property type="entry name" value="ARGININOSUCCINATE LYASE"/>
    <property type="match status" value="1"/>
</dbReference>
<dbReference type="Pfam" id="PF14698">
    <property type="entry name" value="ASL_C2"/>
    <property type="match status" value="1"/>
</dbReference>
<dbReference type="Pfam" id="PF00206">
    <property type="entry name" value="Lyase_1"/>
    <property type="match status" value="1"/>
</dbReference>
<dbReference type="PRINTS" id="PR00145">
    <property type="entry name" value="ARGSUCLYASE"/>
</dbReference>
<dbReference type="PRINTS" id="PR00149">
    <property type="entry name" value="FUMRATELYASE"/>
</dbReference>
<dbReference type="SUPFAM" id="SSF48557">
    <property type="entry name" value="L-aspartase-like"/>
    <property type="match status" value="1"/>
</dbReference>
<dbReference type="PROSITE" id="PS00163">
    <property type="entry name" value="FUMARATE_LYASES"/>
    <property type="match status" value="1"/>
</dbReference>
<name>ARLY_ACIB3</name>
<keyword id="KW-0028">Amino-acid biosynthesis</keyword>
<keyword id="KW-0055">Arginine biosynthesis</keyword>
<keyword id="KW-0963">Cytoplasm</keyword>
<keyword id="KW-0456">Lyase</keyword>
<reference key="1">
    <citation type="journal article" date="2008" name="J. Bacteriol.">
        <title>Comparative genome sequence analysis of multidrug-resistant Acinetobacter baumannii.</title>
        <authorList>
            <person name="Adams M.D."/>
            <person name="Goglin K."/>
            <person name="Molyneaux N."/>
            <person name="Hujer K.M."/>
            <person name="Lavender H."/>
            <person name="Jamison J.J."/>
            <person name="MacDonald I.J."/>
            <person name="Martin K.M."/>
            <person name="Russo T."/>
            <person name="Campagnari A.A."/>
            <person name="Hujer A.M."/>
            <person name="Bonomo R.A."/>
            <person name="Gill S.R."/>
        </authorList>
    </citation>
    <scope>NUCLEOTIDE SEQUENCE [LARGE SCALE GENOMIC DNA]</scope>
    <source>
        <strain>AB307-0294</strain>
    </source>
</reference>